<organismHost>
    <name type="scientific">Ornithodoros</name>
    <name type="common">relapsing fever ticks</name>
    <dbReference type="NCBI Taxonomy" id="6937"/>
</organismHost>
<organismHost>
    <name type="scientific">Phacochoerus aethiopicus</name>
    <name type="common">Warthog</name>
    <dbReference type="NCBI Taxonomy" id="85517"/>
</organismHost>
<organismHost>
    <name type="scientific">Phacochoerus africanus</name>
    <name type="common">Warthog</name>
    <dbReference type="NCBI Taxonomy" id="41426"/>
</organismHost>
<organismHost>
    <name type="scientific">Potamochoerus larvatus</name>
    <name type="common">Bushpig</name>
    <dbReference type="NCBI Taxonomy" id="273792"/>
</organismHost>
<organismHost>
    <name type="scientific">Sus scrofa</name>
    <name type="common">Pig</name>
    <dbReference type="NCBI Taxonomy" id="9823"/>
</organismHost>
<organism>
    <name type="scientific">African swine fever virus (isolate Warthog/Namibia/Wart80/1980)</name>
    <name type="common">ASFV</name>
    <dbReference type="NCBI Taxonomy" id="561444"/>
    <lineage>
        <taxon>Viruses</taxon>
        <taxon>Varidnaviria</taxon>
        <taxon>Bamfordvirae</taxon>
        <taxon>Nucleocytoviricota</taxon>
        <taxon>Pokkesviricetes</taxon>
        <taxon>Asfuvirales</taxon>
        <taxon>Asfarviridae</taxon>
        <taxon>Asfivirus</taxon>
        <taxon>African swine fever virus</taxon>
    </lineage>
</organism>
<gene>
    <name type="ordered locus">War-019</name>
</gene>
<accession>P0C9I9</accession>
<protein>
    <recommendedName>
        <fullName>Protein MGF 110-9L</fullName>
    </recommendedName>
</protein>
<keyword id="KW-0325">Glycoprotein</keyword>
<keyword id="KW-1043">Host membrane</keyword>
<keyword id="KW-0472">Membrane</keyword>
<keyword id="KW-0812">Transmembrane</keyword>
<keyword id="KW-1133">Transmembrane helix</keyword>
<proteinExistence type="inferred from homology"/>
<comment type="function">
    <text evidence="1">Plays a role in virus cell tropism, and may be required for efficient virus replication in macrophages.</text>
</comment>
<comment type="subcellular location">
    <subcellularLocation>
        <location evidence="3">Host membrane</location>
        <topology evidence="3">Multi-pass membrane protein</topology>
    </subcellularLocation>
</comment>
<comment type="similarity">
    <text evidence="3">Belongs to the asfivirus MGF 110 family.</text>
</comment>
<feature type="chain" id="PRO_0000373211" description="Protein MGF 110-9L">
    <location>
        <begin position="1"/>
        <end position="290"/>
    </location>
</feature>
<feature type="transmembrane region" description="Helical" evidence="2">
    <location>
        <begin position="1"/>
        <end position="19"/>
    </location>
</feature>
<feature type="transmembrane region" description="Helical" evidence="2">
    <location>
        <begin position="128"/>
        <end position="148"/>
    </location>
</feature>
<feature type="transmembrane region" description="Helical" evidence="2">
    <location>
        <begin position="163"/>
        <end position="183"/>
    </location>
</feature>
<feature type="glycosylation site" description="N-linked (GlcNAc...) asparagine; by host" evidence="2">
    <location>
        <position position="242"/>
    </location>
</feature>
<feature type="glycosylation site" description="N-linked (GlcNAc...) asparagine; by host" evidence="2">
    <location>
        <position position="267"/>
    </location>
</feature>
<reference key="1">
    <citation type="submission" date="2003-03" db="EMBL/GenBank/DDBJ databases">
        <title>African swine fever virus genomes.</title>
        <authorList>
            <person name="Kutish G.F."/>
            <person name="Rock D.L."/>
        </authorList>
    </citation>
    <scope>NUCLEOTIDE SEQUENCE [LARGE SCALE GENOMIC DNA]</scope>
</reference>
<evidence type="ECO:0000250" key="1"/>
<evidence type="ECO:0000255" key="2"/>
<evidence type="ECO:0000305" key="3"/>
<dbReference type="EMBL" id="AY261366">
    <property type="status" value="NOT_ANNOTATED_CDS"/>
    <property type="molecule type" value="Genomic_DNA"/>
</dbReference>
<dbReference type="Proteomes" id="UP000000858">
    <property type="component" value="Segment"/>
</dbReference>
<dbReference type="GO" id="GO:0033644">
    <property type="term" value="C:host cell membrane"/>
    <property type="evidence" value="ECO:0007669"/>
    <property type="project" value="UniProtKB-SubCell"/>
</dbReference>
<dbReference type="GO" id="GO:0016020">
    <property type="term" value="C:membrane"/>
    <property type="evidence" value="ECO:0007669"/>
    <property type="project" value="UniProtKB-KW"/>
</dbReference>
<dbReference type="InterPro" id="IPR004848">
    <property type="entry name" value="ASFV_fam_110"/>
</dbReference>
<dbReference type="Pfam" id="PF01639">
    <property type="entry name" value="v110"/>
    <property type="match status" value="2"/>
</dbReference>
<sequence>MKVIVLLLVLAVMQPVIQSQPFPGTEELPMTRRPPKKELEYWCTYAKSCDFCWNCRHGVCKNKVFEKHPLIKKNDYIQICRVSRYNDRCSYFTDSRIRRFHIMSCTNPTYYDWFDELMQVKEDRVIDVENIKHTCLCMIATIALIGYIRKQYSRMQLQAATRLLIFLGLYVLLGILMTNIIMNLPLSTDNPMQMRRPPERDLKFWCTYAKHCDFCWTCKDGMCKNKVFSDHPIITQNDYIVNCTVSRWHDRCMYEAHFRIHYQHNMNCSQPKDLEWFIELKRHLINQDDL</sequence>
<name>1109L_ASFWA</name>